<dbReference type="EMBL" id="Z67753">
    <property type="protein sequence ID" value="CAA91703.1"/>
    <property type="molecule type" value="Genomic_DNA"/>
</dbReference>
<dbReference type="PIR" id="S78330">
    <property type="entry name" value="S78330"/>
</dbReference>
<dbReference type="RefSeq" id="NP_043671.1">
    <property type="nucleotide sequence ID" value="NC_001713.1"/>
</dbReference>
<dbReference type="SMR" id="P49511"/>
<dbReference type="GeneID" id="801767"/>
<dbReference type="GO" id="GO:0009535">
    <property type="term" value="C:chloroplast thylakoid membrane"/>
    <property type="evidence" value="ECO:0007669"/>
    <property type="project" value="UniProtKB-SubCell"/>
</dbReference>
<dbReference type="GO" id="GO:0009539">
    <property type="term" value="C:photosystem II reaction center"/>
    <property type="evidence" value="ECO:0007669"/>
    <property type="project" value="InterPro"/>
</dbReference>
<dbReference type="GO" id="GO:0015979">
    <property type="term" value="P:photosynthesis"/>
    <property type="evidence" value="ECO:0007669"/>
    <property type="project" value="UniProtKB-UniRule"/>
</dbReference>
<dbReference type="HAMAP" id="MF_01316">
    <property type="entry name" value="PSII_PsbI"/>
    <property type="match status" value="1"/>
</dbReference>
<dbReference type="InterPro" id="IPR003686">
    <property type="entry name" value="PSII_PsbI"/>
</dbReference>
<dbReference type="InterPro" id="IPR037271">
    <property type="entry name" value="PSII_PsbI_sf"/>
</dbReference>
<dbReference type="NCBIfam" id="NF002735">
    <property type="entry name" value="PRK02655.1"/>
    <property type="match status" value="1"/>
</dbReference>
<dbReference type="PANTHER" id="PTHR35772">
    <property type="entry name" value="PHOTOSYSTEM II REACTION CENTER PROTEIN I"/>
    <property type="match status" value="1"/>
</dbReference>
<dbReference type="PANTHER" id="PTHR35772:SF1">
    <property type="entry name" value="PHOTOSYSTEM II REACTION CENTER PROTEIN I"/>
    <property type="match status" value="1"/>
</dbReference>
<dbReference type="Pfam" id="PF02532">
    <property type="entry name" value="PsbI"/>
    <property type="match status" value="1"/>
</dbReference>
<dbReference type="SUPFAM" id="SSF161041">
    <property type="entry name" value="Photosystem II reaction center protein I, PsbI"/>
    <property type="match status" value="1"/>
</dbReference>
<feature type="chain" id="PRO_0000219638" description="Photosystem II reaction center protein I">
    <location>
        <begin position="1"/>
        <end position="38"/>
    </location>
</feature>
<feature type="transmembrane region" description="Helical" evidence="1">
    <location>
        <begin position="6"/>
        <end position="26"/>
    </location>
</feature>
<reference key="1">
    <citation type="journal article" date="1995" name="Plant Mol. Biol. Rep.">
        <title>The chloroplast genome of a chlorophyll a+c-containing alga, Odontella sinensis.</title>
        <authorList>
            <person name="Kowallik K.V."/>
            <person name="Stoebe B."/>
            <person name="Schaffran I."/>
            <person name="Kroth-Pancic P."/>
            <person name="Freier U."/>
        </authorList>
    </citation>
    <scope>NUCLEOTIDE SEQUENCE [LARGE SCALE GENOMIC DNA]</scope>
</reference>
<geneLocation type="chloroplast"/>
<accession>P49511</accession>
<comment type="function">
    <text evidence="1">One of the components of the core complex of photosystem II (PSII), required for its stability and/or assembly. PSII is a light-driven water:plastoquinone oxidoreductase that uses light energy to abstract electrons from H(2)O, generating O(2) and a proton gradient subsequently used for ATP formation. It consists of a core antenna complex that captures photons, and an electron transfer chain that converts photonic excitation into a charge separation.</text>
</comment>
<comment type="subunit">
    <text evidence="1">PSII is composed of 1 copy each of membrane proteins PsbA, PsbB, PsbC, PsbD, PsbE, PsbF, PsbH, PsbI, PsbJ, PsbK, PsbL, PsbM, PsbT, PsbX, PsbY, PsbZ, Psb30/Ycf12, at least 3 peripheral proteins of the oxygen-evolving complex and a large number of cofactors. It forms dimeric complexes.</text>
</comment>
<comment type="subcellular location">
    <subcellularLocation>
        <location evidence="1">Plastid</location>
        <location evidence="1">Chloroplast thylakoid membrane</location>
        <topology evidence="1">Single-pass membrane protein</topology>
    </subcellularLocation>
</comment>
<comment type="similarity">
    <text evidence="1">Belongs to the PsbI family.</text>
</comment>
<name>PSBI_TRICV</name>
<sequence>MLTLKILVYTTVIFFVSLFIFGFLSSDPSRNPNRKDLE</sequence>
<protein>
    <recommendedName>
        <fullName evidence="1">Photosystem II reaction center protein I</fullName>
        <shortName evidence="1">PSII-I</shortName>
    </recommendedName>
    <alternativeName>
        <fullName evidence="1">PSII 4.8 kDa protein</fullName>
    </alternativeName>
</protein>
<organism>
    <name type="scientific">Trieres chinensis</name>
    <name type="common">Marine centric diatom</name>
    <name type="synonym">Odontella sinensis</name>
    <dbReference type="NCBI Taxonomy" id="1514140"/>
    <lineage>
        <taxon>Eukaryota</taxon>
        <taxon>Sar</taxon>
        <taxon>Stramenopiles</taxon>
        <taxon>Ochrophyta</taxon>
        <taxon>Bacillariophyta</taxon>
        <taxon>Mediophyceae</taxon>
        <taxon>Biddulphiophycidae</taxon>
        <taxon>Eupodiscales</taxon>
        <taxon>Parodontellaceae</taxon>
        <taxon>Trieres</taxon>
    </lineage>
</organism>
<keyword id="KW-0150">Chloroplast</keyword>
<keyword id="KW-0472">Membrane</keyword>
<keyword id="KW-0602">Photosynthesis</keyword>
<keyword id="KW-0604">Photosystem II</keyword>
<keyword id="KW-0934">Plastid</keyword>
<keyword id="KW-0674">Reaction center</keyword>
<keyword id="KW-0793">Thylakoid</keyword>
<keyword id="KW-0812">Transmembrane</keyword>
<keyword id="KW-1133">Transmembrane helix</keyword>
<evidence type="ECO:0000255" key="1">
    <source>
        <dbReference type="HAMAP-Rule" id="MF_01316"/>
    </source>
</evidence>
<gene>
    <name evidence="1" type="primary">psbI</name>
</gene>
<proteinExistence type="inferred from homology"/>